<proteinExistence type="inferred from homology"/>
<comment type="subcellular location">
    <subcellularLocation>
        <location>Plastid</location>
        <location>Chloroplast</location>
    </subcellularLocation>
</comment>
<comment type="similarity">
    <text evidence="1">Belongs to the bacterial ribosomal protein bL36 family.</text>
</comment>
<gene>
    <name evidence="1" type="primary">rpl36</name>
</gene>
<feature type="chain" id="PRO_0000344772" description="Large ribosomal subunit protein bL36c">
    <location>
        <begin position="1"/>
        <end position="37"/>
    </location>
</feature>
<protein>
    <recommendedName>
        <fullName evidence="1">Large ribosomal subunit protein bL36c</fullName>
    </recommendedName>
    <alternativeName>
        <fullName evidence="2">50S ribosomal protein L36, chloroplastic</fullName>
    </alternativeName>
</protein>
<keyword id="KW-0150">Chloroplast</keyword>
<keyword id="KW-0934">Plastid</keyword>
<keyword id="KW-0687">Ribonucleoprotein</keyword>
<keyword id="KW-0689">Ribosomal protein</keyword>
<name>RK36_NASOF</name>
<accession>A4QLW7</accession>
<evidence type="ECO:0000255" key="1">
    <source>
        <dbReference type="HAMAP-Rule" id="MF_00251"/>
    </source>
</evidence>
<evidence type="ECO:0000305" key="2"/>
<dbReference type="EMBL" id="AP009376">
    <property type="protein sequence ID" value="BAF50672.1"/>
    <property type="molecule type" value="Genomic_DNA"/>
</dbReference>
<dbReference type="RefSeq" id="YP_001123848.1">
    <property type="nucleotide sequence ID" value="NC_009275.1"/>
</dbReference>
<dbReference type="SMR" id="A4QLW7"/>
<dbReference type="GeneID" id="4962207"/>
<dbReference type="GO" id="GO:0009507">
    <property type="term" value="C:chloroplast"/>
    <property type="evidence" value="ECO:0007669"/>
    <property type="project" value="UniProtKB-SubCell"/>
</dbReference>
<dbReference type="GO" id="GO:1990904">
    <property type="term" value="C:ribonucleoprotein complex"/>
    <property type="evidence" value="ECO:0007669"/>
    <property type="project" value="UniProtKB-KW"/>
</dbReference>
<dbReference type="GO" id="GO:0005840">
    <property type="term" value="C:ribosome"/>
    <property type="evidence" value="ECO:0007669"/>
    <property type="project" value="UniProtKB-KW"/>
</dbReference>
<dbReference type="GO" id="GO:0003735">
    <property type="term" value="F:structural constituent of ribosome"/>
    <property type="evidence" value="ECO:0007669"/>
    <property type="project" value="InterPro"/>
</dbReference>
<dbReference type="GO" id="GO:0006412">
    <property type="term" value="P:translation"/>
    <property type="evidence" value="ECO:0007669"/>
    <property type="project" value="UniProtKB-UniRule"/>
</dbReference>
<dbReference type="HAMAP" id="MF_00251">
    <property type="entry name" value="Ribosomal_bL36"/>
    <property type="match status" value="1"/>
</dbReference>
<dbReference type="InterPro" id="IPR000473">
    <property type="entry name" value="Ribosomal_bL36"/>
</dbReference>
<dbReference type="InterPro" id="IPR035977">
    <property type="entry name" value="Ribosomal_bL36_sp"/>
</dbReference>
<dbReference type="NCBIfam" id="TIGR01022">
    <property type="entry name" value="rpmJ_bact"/>
    <property type="match status" value="1"/>
</dbReference>
<dbReference type="PANTHER" id="PTHR42888">
    <property type="entry name" value="50S RIBOSOMAL PROTEIN L36, CHLOROPLASTIC"/>
    <property type="match status" value="1"/>
</dbReference>
<dbReference type="PANTHER" id="PTHR42888:SF1">
    <property type="entry name" value="LARGE RIBOSOMAL SUBUNIT PROTEIN BL36C"/>
    <property type="match status" value="1"/>
</dbReference>
<dbReference type="Pfam" id="PF00444">
    <property type="entry name" value="Ribosomal_L36"/>
    <property type="match status" value="1"/>
</dbReference>
<dbReference type="SUPFAM" id="SSF57840">
    <property type="entry name" value="Ribosomal protein L36"/>
    <property type="match status" value="1"/>
</dbReference>
<dbReference type="PROSITE" id="PS00828">
    <property type="entry name" value="RIBOSOMAL_L36"/>
    <property type="match status" value="1"/>
</dbReference>
<sequence length="37" mass="4460">MKIRASVRKICEKCRLIRRRGRIIVICSNPRHKQRQG</sequence>
<organism>
    <name type="scientific">Nasturtium officinale</name>
    <name type="common">Watercress</name>
    <name type="synonym">Rorippa nasturtium-aquaticum</name>
    <dbReference type="NCBI Taxonomy" id="65948"/>
    <lineage>
        <taxon>Eukaryota</taxon>
        <taxon>Viridiplantae</taxon>
        <taxon>Streptophyta</taxon>
        <taxon>Embryophyta</taxon>
        <taxon>Tracheophyta</taxon>
        <taxon>Spermatophyta</taxon>
        <taxon>Magnoliopsida</taxon>
        <taxon>eudicotyledons</taxon>
        <taxon>Gunneridae</taxon>
        <taxon>Pentapetalae</taxon>
        <taxon>rosids</taxon>
        <taxon>malvids</taxon>
        <taxon>Brassicales</taxon>
        <taxon>Brassicaceae</taxon>
        <taxon>Cardamineae</taxon>
        <taxon>Nasturtium</taxon>
    </lineage>
</organism>
<geneLocation type="chloroplast"/>
<reference key="1">
    <citation type="submission" date="2007-03" db="EMBL/GenBank/DDBJ databases">
        <title>Sequencing analysis of Nasturtium officinale chloroplast DNA.</title>
        <authorList>
            <person name="Hosouchi T."/>
            <person name="Tsuruoka H."/>
            <person name="Kotani H."/>
        </authorList>
    </citation>
    <scope>NUCLEOTIDE SEQUENCE [LARGE SCALE GENOMIC DNA]</scope>
</reference>